<gene>
    <name evidence="1" type="primary">rpsF</name>
    <name type="ordered locus">VFMJ11_2425</name>
</gene>
<proteinExistence type="inferred from homology"/>
<dbReference type="EMBL" id="CP001139">
    <property type="protein sequence ID" value="ACH67062.1"/>
    <property type="molecule type" value="Genomic_DNA"/>
</dbReference>
<dbReference type="RefSeq" id="WP_005421140.1">
    <property type="nucleotide sequence ID" value="NC_011184.1"/>
</dbReference>
<dbReference type="SMR" id="B5FBQ3"/>
<dbReference type="GeneID" id="56276702"/>
<dbReference type="KEGG" id="vfm:VFMJ11_2425"/>
<dbReference type="HOGENOM" id="CLU_113441_6_1_6"/>
<dbReference type="Proteomes" id="UP000001857">
    <property type="component" value="Chromosome I"/>
</dbReference>
<dbReference type="GO" id="GO:0022627">
    <property type="term" value="C:cytosolic small ribosomal subunit"/>
    <property type="evidence" value="ECO:0007669"/>
    <property type="project" value="TreeGrafter"/>
</dbReference>
<dbReference type="GO" id="GO:0070181">
    <property type="term" value="F:small ribosomal subunit rRNA binding"/>
    <property type="evidence" value="ECO:0007669"/>
    <property type="project" value="TreeGrafter"/>
</dbReference>
<dbReference type="GO" id="GO:0003735">
    <property type="term" value="F:structural constituent of ribosome"/>
    <property type="evidence" value="ECO:0007669"/>
    <property type="project" value="InterPro"/>
</dbReference>
<dbReference type="GO" id="GO:0006412">
    <property type="term" value="P:translation"/>
    <property type="evidence" value="ECO:0007669"/>
    <property type="project" value="UniProtKB-UniRule"/>
</dbReference>
<dbReference type="CDD" id="cd00473">
    <property type="entry name" value="bS6"/>
    <property type="match status" value="1"/>
</dbReference>
<dbReference type="FunFam" id="3.30.70.60:FF:000003">
    <property type="entry name" value="30S ribosomal protein S6"/>
    <property type="match status" value="1"/>
</dbReference>
<dbReference type="Gene3D" id="3.30.70.60">
    <property type="match status" value="1"/>
</dbReference>
<dbReference type="HAMAP" id="MF_00360">
    <property type="entry name" value="Ribosomal_bS6"/>
    <property type="match status" value="1"/>
</dbReference>
<dbReference type="InterPro" id="IPR000529">
    <property type="entry name" value="Ribosomal_bS6"/>
</dbReference>
<dbReference type="InterPro" id="IPR035980">
    <property type="entry name" value="Ribosomal_bS6_sf"/>
</dbReference>
<dbReference type="InterPro" id="IPR020814">
    <property type="entry name" value="Ribosomal_S6_plastid/chlpt"/>
</dbReference>
<dbReference type="InterPro" id="IPR014717">
    <property type="entry name" value="Transl_elong_EF1B/ribsomal_bS6"/>
</dbReference>
<dbReference type="NCBIfam" id="TIGR00166">
    <property type="entry name" value="S6"/>
    <property type="match status" value="1"/>
</dbReference>
<dbReference type="PANTHER" id="PTHR21011">
    <property type="entry name" value="MITOCHONDRIAL 28S RIBOSOMAL PROTEIN S6"/>
    <property type="match status" value="1"/>
</dbReference>
<dbReference type="PANTHER" id="PTHR21011:SF1">
    <property type="entry name" value="SMALL RIBOSOMAL SUBUNIT PROTEIN BS6M"/>
    <property type="match status" value="1"/>
</dbReference>
<dbReference type="Pfam" id="PF01250">
    <property type="entry name" value="Ribosomal_S6"/>
    <property type="match status" value="1"/>
</dbReference>
<dbReference type="SUPFAM" id="SSF54995">
    <property type="entry name" value="Ribosomal protein S6"/>
    <property type="match status" value="1"/>
</dbReference>
<name>RS6_ALIFM</name>
<reference key="1">
    <citation type="submission" date="2008-08" db="EMBL/GenBank/DDBJ databases">
        <title>Complete sequence of Vibrio fischeri strain MJ11.</title>
        <authorList>
            <person name="Mandel M.J."/>
            <person name="Stabb E.V."/>
            <person name="Ruby E.G."/>
            <person name="Ferriera S."/>
            <person name="Johnson J."/>
            <person name="Kravitz S."/>
            <person name="Beeson K."/>
            <person name="Sutton G."/>
            <person name="Rogers Y.-H."/>
            <person name="Friedman R."/>
            <person name="Frazier M."/>
            <person name="Venter J.C."/>
        </authorList>
    </citation>
    <scope>NUCLEOTIDE SEQUENCE [LARGE SCALE GENOMIC DNA]</scope>
    <source>
        <strain>MJ11</strain>
    </source>
</reference>
<organism>
    <name type="scientific">Aliivibrio fischeri (strain MJ11)</name>
    <name type="common">Vibrio fischeri</name>
    <dbReference type="NCBI Taxonomy" id="388396"/>
    <lineage>
        <taxon>Bacteria</taxon>
        <taxon>Pseudomonadati</taxon>
        <taxon>Pseudomonadota</taxon>
        <taxon>Gammaproteobacteria</taxon>
        <taxon>Vibrionales</taxon>
        <taxon>Vibrionaceae</taxon>
        <taxon>Aliivibrio</taxon>
    </lineage>
</organism>
<keyword id="KW-0687">Ribonucleoprotein</keyword>
<keyword id="KW-0689">Ribosomal protein</keyword>
<keyword id="KW-0694">RNA-binding</keyword>
<keyword id="KW-0699">rRNA-binding</keyword>
<accession>B5FBQ3</accession>
<comment type="function">
    <text evidence="1">Binds together with bS18 to 16S ribosomal RNA.</text>
</comment>
<comment type="similarity">
    <text evidence="1">Belongs to the bacterial ribosomal protein bS6 family.</text>
</comment>
<evidence type="ECO:0000255" key="1">
    <source>
        <dbReference type="HAMAP-Rule" id="MF_00360"/>
    </source>
</evidence>
<evidence type="ECO:0000256" key="2">
    <source>
        <dbReference type="SAM" id="MobiDB-lite"/>
    </source>
</evidence>
<evidence type="ECO:0000305" key="3"/>
<sequence length="126" mass="14466">MRHYEIVFMVHPDQSEQVAGMIERYTGSITEAGGTIHRLEDWGRRQMAYPINKLHKAHYVLMNVESEQAVIDELETAFRYNDAVLRNMIMRTKAAITEPSVMMKAKEERSAKREDAAPRAEEAAAE</sequence>
<feature type="chain" id="PRO_1000120821" description="Small ribosomal subunit protein bS6">
    <location>
        <begin position="1"/>
        <end position="126"/>
    </location>
</feature>
<feature type="region of interest" description="Disordered" evidence="2">
    <location>
        <begin position="101"/>
        <end position="126"/>
    </location>
</feature>
<feature type="compositionally biased region" description="Basic and acidic residues" evidence="2">
    <location>
        <begin position="104"/>
        <end position="126"/>
    </location>
</feature>
<protein>
    <recommendedName>
        <fullName evidence="1">Small ribosomal subunit protein bS6</fullName>
    </recommendedName>
    <alternativeName>
        <fullName evidence="3">30S ribosomal protein S6</fullName>
    </alternativeName>
</protein>